<reference key="1">
    <citation type="submission" date="2007-04" db="EMBL/GenBank/DDBJ databases">
        <title>Complete sequence of Shewanella putrefaciens CN-32.</title>
        <authorList>
            <consortium name="US DOE Joint Genome Institute"/>
            <person name="Copeland A."/>
            <person name="Lucas S."/>
            <person name="Lapidus A."/>
            <person name="Barry K."/>
            <person name="Detter J.C."/>
            <person name="Glavina del Rio T."/>
            <person name="Hammon N."/>
            <person name="Israni S."/>
            <person name="Dalin E."/>
            <person name="Tice H."/>
            <person name="Pitluck S."/>
            <person name="Chain P."/>
            <person name="Malfatti S."/>
            <person name="Shin M."/>
            <person name="Vergez L."/>
            <person name="Schmutz J."/>
            <person name="Larimer F."/>
            <person name="Land M."/>
            <person name="Hauser L."/>
            <person name="Kyrpides N."/>
            <person name="Mikhailova N."/>
            <person name="Romine M.F."/>
            <person name="Fredrickson J."/>
            <person name="Tiedje J."/>
            <person name="Richardson P."/>
        </authorList>
    </citation>
    <scope>NUCLEOTIDE SEQUENCE [LARGE SCALE GENOMIC DNA]</scope>
    <source>
        <strain>CN-32 / ATCC BAA-453</strain>
    </source>
</reference>
<feature type="chain" id="PRO_1000066525" description="FMN-dependent NADH:quinone oxidoreductase">
    <location>
        <begin position="1"/>
        <end position="198"/>
    </location>
</feature>
<feature type="binding site" evidence="1">
    <location>
        <position position="10"/>
    </location>
    <ligand>
        <name>FMN</name>
        <dbReference type="ChEBI" id="CHEBI:58210"/>
    </ligand>
</feature>
<feature type="binding site" evidence="1">
    <location>
        <begin position="16"/>
        <end position="18"/>
    </location>
    <ligand>
        <name>FMN</name>
        <dbReference type="ChEBI" id="CHEBI:58210"/>
    </ligand>
</feature>
<feature type="binding site" evidence="1">
    <location>
        <begin position="94"/>
        <end position="97"/>
    </location>
    <ligand>
        <name>FMN</name>
        <dbReference type="ChEBI" id="CHEBI:58210"/>
    </ligand>
</feature>
<feature type="binding site" evidence="1">
    <location>
        <begin position="138"/>
        <end position="141"/>
    </location>
    <ligand>
        <name>FMN</name>
        <dbReference type="ChEBI" id="CHEBI:58210"/>
    </ligand>
</feature>
<name>AZOR_SHEPC</name>
<accession>A4Y2H2</accession>
<gene>
    <name evidence="1" type="primary">azoR</name>
    <name type="ordered locus">Sputcn32_0423</name>
</gene>
<comment type="function">
    <text evidence="1">Quinone reductase that provides resistance to thiol-specific stress caused by electrophilic quinones.</text>
</comment>
<comment type="function">
    <text evidence="1">Also exhibits azoreductase activity. Catalyzes the reductive cleavage of the azo bond in aromatic azo compounds to the corresponding amines.</text>
</comment>
<comment type="catalytic activity">
    <reaction evidence="1">
        <text>2 a quinone + NADH + H(+) = 2 a 1,4-benzosemiquinone + NAD(+)</text>
        <dbReference type="Rhea" id="RHEA:65952"/>
        <dbReference type="ChEBI" id="CHEBI:15378"/>
        <dbReference type="ChEBI" id="CHEBI:57540"/>
        <dbReference type="ChEBI" id="CHEBI:57945"/>
        <dbReference type="ChEBI" id="CHEBI:132124"/>
        <dbReference type="ChEBI" id="CHEBI:134225"/>
    </reaction>
</comment>
<comment type="catalytic activity">
    <reaction evidence="1">
        <text>N,N-dimethyl-1,4-phenylenediamine + anthranilate + 2 NAD(+) = 2-(4-dimethylaminophenyl)diazenylbenzoate + 2 NADH + 2 H(+)</text>
        <dbReference type="Rhea" id="RHEA:55872"/>
        <dbReference type="ChEBI" id="CHEBI:15378"/>
        <dbReference type="ChEBI" id="CHEBI:15783"/>
        <dbReference type="ChEBI" id="CHEBI:16567"/>
        <dbReference type="ChEBI" id="CHEBI:57540"/>
        <dbReference type="ChEBI" id="CHEBI:57945"/>
        <dbReference type="ChEBI" id="CHEBI:71579"/>
        <dbReference type="EC" id="1.7.1.17"/>
    </reaction>
</comment>
<comment type="cofactor">
    <cofactor evidence="1">
        <name>FMN</name>
        <dbReference type="ChEBI" id="CHEBI:58210"/>
    </cofactor>
    <text evidence="1">Binds 1 FMN per subunit.</text>
</comment>
<comment type="subunit">
    <text evidence="1">Homodimer.</text>
</comment>
<comment type="similarity">
    <text evidence="1">Belongs to the azoreductase type 1 family.</text>
</comment>
<proteinExistence type="inferred from homology"/>
<evidence type="ECO:0000255" key="1">
    <source>
        <dbReference type="HAMAP-Rule" id="MF_01216"/>
    </source>
</evidence>
<organism>
    <name type="scientific">Shewanella putrefaciens (strain CN-32 / ATCC BAA-453)</name>
    <dbReference type="NCBI Taxonomy" id="319224"/>
    <lineage>
        <taxon>Bacteria</taxon>
        <taxon>Pseudomonadati</taxon>
        <taxon>Pseudomonadota</taxon>
        <taxon>Gammaproteobacteria</taxon>
        <taxon>Alteromonadales</taxon>
        <taxon>Shewanellaceae</taxon>
        <taxon>Shewanella</taxon>
    </lineage>
</organism>
<dbReference type="EC" id="1.6.5.-" evidence="1"/>
<dbReference type="EC" id="1.7.1.17" evidence="1"/>
<dbReference type="EMBL" id="CP000681">
    <property type="protein sequence ID" value="ABP74155.1"/>
    <property type="molecule type" value="Genomic_DNA"/>
</dbReference>
<dbReference type="SMR" id="A4Y2H2"/>
<dbReference type="STRING" id="319224.Sputcn32_0423"/>
<dbReference type="KEGG" id="spc:Sputcn32_0423"/>
<dbReference type="eggNOG" id="COG1182">
    <property type="taxonomic scope" value="Bacteria"/>
</dbReference>
<dbReference type="HOGENOM" id="CLU_088964_0_0_6"/>
<dbReference type="GO" id="GO:0009055">
    <property type="term" value="F:electron transfer activity"/>
    <property type="evidence" value="ECO:0007669"/>
    <property type="project" value="UniProtKB-UniRule"/>
</dbReference>
<dbReference type="GO" id="GO:0010181">
    <property type="term" value="F:FMN binding"/>
    <property type="evidence" value="ECO:0007669"/>
    <property type="project" value="UniProtKB-UniRule"/>
</dbReference>
<dbReference type="GO" id="GO:0016652">
    <property type="term" value="F:oxidoreductase activity, acting on NAD(P)H as acceptor"/>
    <property type="evidence" value="ECO:0007669"/>
    <property type="project" value="UniProtKB-UniRule"/>
</dbReference>
<dbReference type="GO" id="GO:0016655">
    <property type="term" value="F:oxidoreductase activity, acting on NAD(P)H, quinone or similar compound as acceptor"/>
    <property type="evidence" value="ECO:0007669"/>
    <property type="project" value="InterPro"/>
</dbReference>
<dbReference type="Gene3D" id="3.40.50.360">
    <property type="match status" value="1"/>
</dbReference>
<dbReference type="HAMAP" id="MF_01216">
    <property type="entry name" value="Azoreductase_type1"/>
    <property type="match status" value="1"/>
</dbReference>
<dbReference type="InterPro" id="IPR003680">
    <property type="entry name" value="Flavodoxin_fold"/>
</dbReference>
<dbReference type="InterPro" id="IPR029039">
    <property type="entry name" value="Flavoprotein-like_sf"/>
</dbReference>
<dbReference type="InterPro" id="IPR050104">
    <property type="entry name" value="FMN-dep_NADH:Q_OxRdtase_AzoR1"/>
</dbReference>
<dbReference type="InterPro" id="IPR023048">
    <property type="entry name" value="NADH:quinone_OxRdtase_FMN_depd"/>
</dbReference>
<dbReference type="PANTHER" id="PTHR43741">
    <property type="entry name" value="FMN-DEPENDENT NADH-AZOREDUCTASE 1"/>
    <property type="match status" value="1"/>
</dbReference>
<dbReference type="PANTHER" id="PTHR43741:SF2">
    <property type="entry name" value="FMN-DEPENDENT NADH:QUINONE OXIDOREDUCTASE"/>
    <property type="match status" value="1"/>
</dbReference>
<dbReference type="Pfam" id="PF02525">
    <property type="entry name" value="Flavodoxin_2"/>
    <property type="match status" value="1"/>
</dbReference>
<dbReference type="SUPFAM" id="SSF52218">
    <property type="entry name" value="Flavoproteins"/>
    <property type="match status" value="1"/>
</dbReference>
<sequence length="198" mass="21058">MSKVLILKSSILGGYSQSAVLIDHLASHWENQGAAITVRDLGGKDVLPMVDGEIASGLRGGAELSARQQEMLALSDTLVAELKANDTIVIAAPMYNFTIPAQLKNWIDFIARAGVTFTYTETGSKGLVEGKRAVLVTTRGGAHKDGPTDHVVPYLKTVLAFIGITNVEVVYAEALNMGPEAHDKGMSEAKHSIDLLTA</sequence>
<protein>
    <recommendedName>
        <fullName evidence="1">FMN-dependent NADH:quinone oxidoreductase</fullName>
        <ecNumber evidence="1">1.6.5.-</ecNumber>
    </recommendedName>
    <alternativeName>
        <fullName evidence="1">Azo-dye reductase</fullName>
    </alternativeName>
    <alternativeName>
        <fullName evidence="1">FMN-dependent NADH-azo compound oxidoreductase</fullName>
    </alternativeName>
    <alternativeName>
        <fullName evidence="1">FMN-dependent NADH-azoreductase</fullName>
        <ecNumber evidence="1">1.7.1.17</ecNumber>
    </alternativeName>
</protein>
<keyword id="KW-0285">Flavoprotein</keyword>
<keyword id="KW-0288">FMN</keyword>
<keyword id="KW-0520">NAD</keyword>
<keyword id="KW-0560">Oxidoreductase</keyword>